<comment type="catalytic activity">
    <reaction evidence="1">
        <text>1-(2-carboxyphenylamino)-1-deoxy-D-ribulose 5-phosphate + H(+) = (1S,2R)-1-C-(indol-3-yl)glycerol 3-phosphate + CO2 + H2O</text>
        <dbReference type="Rhea" id="RHEA:23476"/>
        <dbReference type="ChEBI" id="CHEBI:15377"/>
        <dbReference type="ChEBI" id="CHEBI:15378"/>
        <dbReference type="ChEBI" id="CHEBI:16526"/>
        <dbReference type="ChEBI" id="CHEBI:58613"/>
        <dbReference type="ChEBI" id="CHEBI:58866"/>
        <dbReference type="EC" id="4.1.1.48"/>
    </reaction>
</comment>
<comment type="pathway">
    <text evidence="1">Amino-acid biosynthesis; L-tryptophan biosynthesis; L-tryptophan from chorismate: step 4/5.</text>
</comment>
<comment type="similarity">
    <text evidence="1">Belongs to the TrpC family.</text>
</comment>
<proteinExistence type="inferred from homology"/>
<evidence type="ECO:0000255" key="1">
    <source>
        <dbReference type="HAMAP-Rule" id="MF_00134"/>
    </source>
</evidence>
<feature type="chain" id="PRO_1000018531" description="Indole-3-glycerol phosphate synthase">
    <location>
        <begin position="1"/>
        <end position="278"/>
    </location>
</feature>
<gene>
    <name evidence="1" type="primary">trpC</name>
    <name type="ordered locus">PA14_08360</name>
</gene>
<keyword id="KW-0028">Amino-acid biosynthesis</keyword>
<keyword id="KW-0057">Aromatic amino acid biosynthesis</keyword>
<keyword id="KW-0210">Decarboxylase</keyword>
<keyword id="KW-0456">Lyase</keyword>
<keyword id="KW-0822">Tryptophan biosynthesis</keyword>
<accession>Q02TB5</accession>
<dbReference type="EC" id="4.1.1.48" evidence="1"/>
<dbReference type="EMBL" id="CP000438">
    <property type="protein sequence ID" value="ABJ15612.1"/>
    <property type="molecule type" value="Genomic_DNA"/>
</dbReference>
<dbReference type="RefSeq" id="WP_003137410.1">
    <property type="nucleotide sequence ID" value="NZ_CP034244.1"/>
</dbReference>
<dbReference type="SMR" id="Q02TB5"/>
<dbReference type="KEGG" id="pau:PA14_08360"/>
<dbReference type="PseudoCAP" id="PA14_08360"/>
<dbReference type="HOGENOM" id="CLU_034247_2_0_6"/>
<dbReference type="BioCyc" id="PAER208963:G1G74-692-MONOMER"/>
<dbReference type="UniPathway" id="UPA00035">
    <property type="reaction ID" value="UER00043"/>
</dbReference>
<dbReference type="Proteomes" id="UP000000653">
    <property type="component" value="Chromosome"/>
</dbReference>
<dbReference type="GO" id="GO:0004425">
    <property type="term" value="F:indole-3-glycerol-phosphate synthase activity"/>
    <property type="evidence" value="ECO:0007669"/>
    <property type="project" value="UniProtKB-UniRule"/>
</dbReference>
<dbReference type="GO" id="GO:0004640">
    <property type="term" value="F:phosphoribosylanthranilate isomerase activity"/>
    <property type="evidence" value="ECO:0007669"/>
    <property type="project" value="TreeGrafter"/>
</dbReference>
<dbReference type="GO" id="GO:0000162">
    <property type="term" value="P:L-tryptophan biosynthetic process"/>
    <property type="evidence" value="ECO:0007669"/>
    <property type="project" value="UniProtKB-UniRule"/>
</dbReference>
<dbReference type="CDD" id="cd00331">
    <property type="entry name" value="IGPS"/>
    <property type="match status" value="1"/>
</dbReference>
<dbReference type="FunFam" id="3.20.20.70:FF:000024">
    <property type="entry name" value="Indole-3-glycerol phosphate synthase"/>
    <property type="match status" value="1"/>
</dbReference>
<dbReference type="Gene3D" id="3.20.20.70">
    <property type="entry name" value="Aldolase class I"/>
    <property type="match status" value="1"/>
</dbReference>
<dbReference type="HAMAP" id="MF_00134_B">
    <property type="entry name" value="IGPS_B"/>
    <property type="match status" value="1"/>
</dbReference>
<dbReference type="InterPro" id="IPR013785">
    <property type="entry name" value="Aldolase_TIM"/>
</dbReference>
<dbReference type="InterPro" id="IPR045186">
    <property type="entry name" value="Indole-3-glycerol_P_synth"/>
</dbReference>
<dbReference type="InterPro" id="IPR013798">
    <property type="entry name" value="Indole-3-glycerol_P_synth_dom"/>
</dbReference>
<dbReference type="InterPro" id="IPR001468">
    <property type="entry name" value="Indole-3-GlycerolPSynthase_CS"/>
</dbReference>
<dbReference type="InterPro" id="IPR011060">
    <property type="entry name" value="RibuloseP-bd_barrel"/>
</dbReference>
<dbReference type="NCBIfam" id="NF001370">
    <property type="entry name" value="PRK00278.1-2"/>
    <property type="match status" value="1"/>
</dbReference>
<dbReference type="NCBIfam" id="NF001373">
    <property type="entry name" value="PRK00278.1-6"/>
    <property type="match status" value="1"/>
</dbReference>
<dbReference type="NCBIfam" id="NF001377">
    <property type="entry name" value="PRK00278.2-4"/>
    <property type="match status" value="1"/>
</dbReference>
<dbReference type="PANTHER" id="PTHR22854:SF2">
    <property type="entry name" value="INDOLE-3-GLYCEROL-PHOSPHATE SYNTHASE"/>
    <property type="match status" value="1"/>
</dbReference>
<dbReference type="PANTHER" id="PTHR22854">
    <property type="entry name" value="TRYPTOPHAN BIOSYNTHESIS PROTEIN"/>
    <property type="match status" value="1"/>
</dbReference>
<dbReference type="Pfam" id="PF00218">
    <property type="entry name" value="IGPS"/>
    <property type="match status" value="1"/>
</dbReference>
<dbReference type="SUPFAM" id="SSF51366">
    <property type="entry name" value="Ribulose-phoshate binding barrel"/>
    <property type="match status" value="1"/>
</dbReference>
<dbReference type="PROSITE" id="PS00614">
    <property type="entry name" value="IGPS"/>
    <property type="match status" value="1"/>
</dbReference>
<name>TRPC_PSEAB</name>
<organism>
    <name type="scientific">Pseudomonas aeruginosa (strain UCBPP-PA14)</name>
    <dbReference type="NCBI Taxonomy" id="208963"/>
    <lineage>
        <taxon>Bacteria</taxon>
        <taxon>Pseudomonadati</taxon>
        <taxon>Pseudomonadota</taxon>
        <taxon>Gammaproteobacteria</taxon>
        <taxon>Pseudomonadales</taxon>
        <taxon>Pseudomonadaceae</taxon>
        <taxon>Pseudomonas</taxon>
    </lineage>
</organism>
<protein>
    <recommendedName>
        <fullName evidence="1">Indole-3-glycerol phosphate synthase</fullName>
        <shortName evidence="1">IGPS</shortName>
        <ecNumber evidence="1">4.1.1.48</ecNumber>
    </recommendedName>
</protein>
<sequence>MSVPTVLQKILARKAEEVAERRARVNLAEVERLARSADAPRGFANALLERAKRKEPAVIAEIKKASPSKGVLREHFVPAEIARSYEAGGAACLSVLTDVDFFQGADAYLKEARAACALPVVRKDFMIDPYQIVEARAIGADCILLIVSALDDVLMAELAATAKSVGLDVLVEVHDGTELERALKTLDTPLVGINNRNLHTFEVSLETTLDLLPEIPRDRLVVTESGILNRADVELMEVSEVYAFLVGEAFMRADDPGLELKRLFFQERGGVVLGADPD</sequence>
<reference key="1">
    <citation type="journal article" date="2006" name="Genome Biol.">
        <title>Genomic analysis reveals that Pseudomonas aeruginosa virulence is combinatorial.</title>
        <authorList>
            <person name="Lee D.G."/>
            <person name="Urbach J.M."/>
            <person name="Wu G."/>
            <person name="Liberati N.T."/>
            <person name="Feinbaum R.L."/>
            <person name="Miyata S."/>
            <person name="Diggins L.T."/>
            <person name="He J."/>
            <person name="Saucier M."/>
            <person name="Deziel E."/>
            <person name="Friedman L."/>
            <person name="Li L."/>
            <person name="Grills G."/>
            <person name="Montgomery K."/>
            <person name="Kucherlapati R."/>
            <person name="Rahme L.G."/>
            <person name="Ausubel F.M."/>
        </authorList>
    </citation>
    <scope>NUCLEOTIDE SEQUENCE [LARGE SCALE GENOMIC DNA]</scope>
    <source>
        <strain>UCBPP-PA14</strain>
    </source>
</reference>